<evidence type="ECO:0000255" key="1">
    <source>
        <dbReference type="HAMAP-Rule" id="MF_01702"/>
    </source>
</evidence>
<proteinExistence type="inferred from homology"/>
<reference key="1">
    <citation type="journal article" date="2005" name="J. Bacteriol.">
        <title>Completion of the genome sequence of Brucella abortus and comparison to the highly similar genomes of Brucella melitensis and Brucella suis.</title>
        <authorList>
            <person name="Halling S.M."/>
            <person name="Peterson-Burch B.D."/>
            <person name="Bricker B.J."/>
            <person name="Zuerner R.L."/>
            <person name="Qing Z."/>
            <person name="Li L.-L."/>
            <person name="Kapur V."/>
            <person name="Alt D.P."/>
            <person name="Olsen S.C."/>
        </authorList>
    </citation>
    <scope>NUCLEOTIDE SEQUENCE [LARGE SCALE GENOMIC DNA]</scope>
    <source>
        <strain>9-941</strain>
    </source>
</reference>
<dbReference type="EC" id="7.3.2.1" evidence="1"/>
<dbReference type="EMBL" id="AE017223">
    <property type="protein sequence ID" value="AAX75412.1"/>
    <property type="molecule type" value="Genomic_DNA"/>
</dbReference>
<dbReference type="RefSeq" id="WP_002965205.1">
    <property type="nucleotide sequence ID" value="NC_006932.1"/>
</dbReference>
<dbReference type="SMR" id="Q57AC2"/>
<dbReference type="EnsemblBacteria" id="AAX75412">
    <property type="protein sequence ID" value="AAX75412"/>
    <property type="gene ID" value="BruAb1_2116"/>
</dbReference>
<dbReference type="GeneID" id="97534603"/>
<dbReference type="KEGG" id="bmb:BruAb1_2116"/>
<dbReference type="HOGENOM" id="CLU_000604_1_22_5"/>
<dbReference type="Proteomes" id="UP000000540">
    <property type="component" value="Chromosome I"/>
</dbReference>
<dbReference type="GO" id="GO:0005886">
    <property type="term" value="C:plasma membrane"/>
    <property type="evidence" value="ECO:0007669"/>
    <property type="project" value="UniProtKB-SubCell"/>
</dbReference>
<dbReference type="GO" id="GO:0005524">
    <property type="term" value="F:ATP binding"/>
    <property type="evidence" value="ECO:0007669"/>
    <property type="project" value="UniProtKB-KW"/>
</dbReference>
<dbReference type="GO" id="GO:0016887">
    <property type="term" value="F:ATP hydrolysis activity"/>
    <property type="evidence" value="ECO:0007669"/>
    <property type="project" value="InterPro"/>
</dbReference>
<dbReference type="GO" id="GO:0015415">
    <property type="term" value="F:ATPase-coupled phosphate ion transmembrane transporter activity"/>
    <property type="evidence" value="ECO:0007669"/>
    <property type="project" value="UniProtKB-EC"/>
</dbReference>
<dbReference type="GO" id="GO:0035435">
    <property type="term" value="P:phosphate ion transmembrane transport"/>
    <property type="evidence" value="ECO:0007669"/>
    <property type="project" value="InterPro"/>
</dbReference>
<dbReference type="CDD" id="cd03260">
    <property type="entry name" value="ABC_PstB_phosphate_transporter"/>
    <property type="match status" value="1"/>
</dbReference>
<dbReference type="Gene3D" id="3.40.50.300">
    <property type="entry name" value="P-loop containing nucleotide triphosphate hydrolases"/>
    <property type="match status" value="1"/>
</dbReference>
<dbReference type="InterPro" id="IPR003593">
    <property type="entry name" value="AAA+_ATPase"/>
</dbReference>
<dbReference type="InterPro" id="IPR003439">
    <property type="entry name" value="ABC_transporter-like_ATP-bd"/>
</dbReference>
<dbReference type="InterPro" id="IPR017871">
    <property type="entry name" value="ABC_transporter-like_CS"/>
</dbReference>
<dbReference type="InterPro" id="IPR027417">
    <property type="entry name" value="P-loop_NTPase"/>
</dbReference>
<dbReference type="InterPro" id="IPR005670">
    <property type="entry name" value="PstB-like"/>
</dbReference>
<dbReference type="NCBIfam" id="TIGR00972">
    <property type="entry name" value="3a0107s01c2"/>
    <property type="match status" value="1"/>
</dbReference>
<dbReference type="PANTHER" id="PTHR43423">
    <property type="entry name" value="ABC TRANSPORTER I FAMILY MEMBER 17"/>
    <property type="match status" value="1"/>
</dbReference>
<dbReference type="PANTHER" id="PTHR43423:SF1">
    <property type="entry name" value="ABC TRANSPORTER I FAMILY MEMBER 17"/>
    <property type="match status" value="1"/>
</dbReference>
<dbReference type="Pfam" id="PF00005">
    <property type="entry name" value="ABC_tran"/>
    <property type="match status" value="1"/>
</dbReference>
<dbReference type="SMART" id="SM00382">
    <property type="entry name" value="AAA"/>
    <property type="match status" value="1"/>
</dbReference>
<dbReference type="SUPFAM" id="SSF52540">
    <property type="entry name" value="P-loop containing nucleoside triphosphate hydrolases"/>
    <property type="match status" value="1"/>
</dbReference>
<dbReference type="PROSITE" id="PS00211">
    <property type="entry name" value="ABC_TRANSPORTER_1"/>
    <property type="match status" value="1"/>
</dbReference>
<dbReference type="PROSITE" id="PS50893">
    <property type="entry name" value="ABC_TRANSPORTER_2"/>
    <property type="match status" value="1"/>
</dbReference>
<dbReference type="PROSITE" id="PS51238">
    <property type="entry name" value="PSTB"/>
    <property type="match status" value="1"/>
</dbReference>
<accession>Q57AC2</accession>
<gene>
    <name evidence="1" type="primary">pstB</name>
    <name type="ordered locus">BruAb1_2116</name>
</gene>
<sequence length="273" mass="30257">MNLMAERSLENAVGEKMNATASSIKMRGEKVCVFYGEKQALFDVDLDIPEKMVTALIGPSGCGKSTFLRSLNRMNDTIEGCRIAGRITLDNEDIYDPRLDVVELRARVGMVFQKPNPFPKSIYENVAYGPRIHGLARSKAELEEIVVTSLQKASLFEEVKDRLHDAGTGLSGGQQQRLCIARAIAVSPEVILMDEPCSALDPIATAKVEELIDELRQNFTIVIVTHSMQQAARVSQRTAMFHLGNLVEVGDTEMMFTAPTEKRTQDYITGRFG</sequence>
<keyword id="KW-0067">ATP-binding</keyword>
<keyword id="KW-0997">Cell inner membrane</keyword>
<keyword id="KW-1003">Cell membrane</keyword>
<keyword id="KW-0472">Membrane</keyword>
<keyword id="KW-0547">Nucleotide-binding</keyword>
<keyword id="KW-0592">Phosphate transport</keyword>
<keyword id="KW-1278">Translocase</keyword>
<keyword id="KW-0813">Transport</keyword>
<protein>
    <recommendedName>
        <fullName evidence="1">Phosphate import ATP-binding protein PstB</fullName>
        <ecNumber evidence="1">7.3.2.1</ecNumber>
    </recommendedName>
    <alternativeName>
        <fullName evidence="1">ABC phosphate transporter</fullName>
    </alternativeName>
    <alternativeName>
        <fullName evidence="1">Phosphate-transporting ATPase</fullName>
    </alternativeName>
</protein>
<name>PSTB_BRUAB</name>
<organism>
    <name type="scientific">Brucella abortus biovar 1 (strain 9-941)</name>
    <dbReference type="NCBI Taxonomy" id="262698"/>
    <lineage>
        <taxon>Bacteria</taxon>
        <taxon>Pseudomonadati</taxon>
        <taxon>Pseudomonadota</taxon>
        <taxon>Alphaproteobacteria</taxon>
        <taxon>Hyphomicrobiales</taxon>
        <taxon>Brucellaceae</taxon>
        <taxon>Brucella/Ochrobactrum group</taxon>
        <taxon>Brucella</taxon>
    </lineage>
</organism>
<comment type="function">
    <text evidence="1">Part of the ABC transporter complex PstSACB involved in phosphate import. Responsible for energy coupling to the transport system.</text>
</comment>
<comment type="catalytic activity">
    <reaction evidence="1">
        <text>phosphate(out) + ATP + H2O = ADP + 2 phosphate(in) + H(+)</text>
        <dbReference type="Rhea" id="RHEA:24440"/>
        <dbReference type="ChEBI" id="CHEBI:15377"/>
        <dbReference type="ChEBI" id="CHEBI:15378"/>
        <dbReference type="ChEBI" id="CHEBI:30616"/>
        <dbReference type="ChEBI" id="CHEBI:43474"/>
        <dbReference type="ChEBI" id="CHEBI:456216"/>
        <dbReference type="EC" id="7.3.2.1"/>
    </reaction>
</comment>
<comment type="subunit">
    <text evidence="1">The complex is composed of two ATP-binding proteins (PstB), two transmembrane proteins (PstC and PstA) and a solute-binding protein (PstS).</text>
</comment>
<comment type="subcellular location">
    <subcellularLocation>
        <location evidence="1">Cell inner membrane</location>
        <topology evidence="1">Peripheral membrane protein</topology>
    </subcellularLocation>
</comment>
<comment type="similarity">
    <text evidence="1">Belongs to the ABC transporter superfamily. Phosphate importer (TC 3.A.1.7) family.</text>
</comment>
<feature type="chain" id="PRO_0000260205" description="Phosphate import ATP-binding protein PstB">
    <location>
        <begin position="1"/>
        <end position="273"/>
    </location>
</feature>
<feature type="domain" description="ABC transporter" evidence="1">
    <location>
        <begin position="26"/>
        <end position="268"/>
    </location>
</feature>
<feature type="binding site" evidence="1">
    <location>
        <begin position="58"/>
        <end position="65"/>
    </location>
    <ligand>
        <name>ATP</name>
        <dbReference type="ChEBI" id="CHEBI:30616"/>
    </ligand>
</feature>